<proteinExistence type="evidence at protein level"/>
<reference key="1">
    <citation type="journal article" date="1991" name="Biochem. Biophys. Res. Commun.">
        <title>Molecular cloning of the cytochrome aa3 gene from the archaeon (Archaebacterium) Halobacterium halobium.</title>
        <authorList>
            <person name="Denda K."/>
            <person name="Fujiwara T."/>
            <person name="Seki M."/>
            <person name="Yoshida M."/>
            <person name="Fukumori Y."/>
            <person name="Yamanaka T."/>
        </authorList>
    </citation>
    <scope>NUCLEOTIDE SEQUENCE [GENOMIC DNA]</scope>
    <scope>PARTIAL PROTEIN SEQUENCE</scope>
</reference>
<reference key="2">
    <citation type="journal article" date="2000" name="Proc. Natl. Acad. Sci. U.S.A.">
        <title>Genome sequence of Halobacterium species NRC-1.</title>
        <authorList>
            <person name="Ng W.V."/>
            <person name="Kennedy S.P."/>
            <person name="Mahairas G.G."/>
            <person name="Berquist B."/>
            <person name="Pan M."/>
            <person name="Shukla H.D."/>
            <person name="Lasky S.R."/>
            <person name="Baliga N.S."/>
            <person name="Thorsson V."/>
            <person name="Sbrogna J."/>
            <person name="Swartzell S."/>
            <person name="Weir D."/>
            <person name="Hall J."/>
            <person name="Dahl T.A."/>
            <person name="Welti R."/>
            <person name="Goo Y.A."/>
            <person name="Leithauser B."/>
            <person name="Keller K."/>
            <person name="Cruz R."/>
            <person name="Danson M.J."/>
            <person name="Hough D.W."/>
            <person name="Maddocks D.G."/>
            <person name="Jablonski P.E."/>
            <person name="Krebs M.P."/>
            <person name="Angevine C.M."/>
            <person name="Dale H."/>
            <person name="Isenbarger T.A."/>
            <person name="Peck R.F."/>
            <person name="Pohlschroder M."/>
            <person name="Spudich J.L."/>
            <person name="Jung K.-H."/>
            <person name="Alam M."/>
            <person name="Freitas T."/>
            <person name="Hou S."/>
            <person name="Daniels C.J."/>
            <person name="Dennis P.P."/>
            <person name="Omer A.D."/>
            <person name="Ebhardt H."/>
            <person name="Lowe T.M."/>
            <person name="Liang P."/>
            <person name="Riley M."/>
            <person name="Hood L."/>
            <person name="DasSarma S."/>
        </authorList>
    </citation>
    <scope>NUCLEOTIDE SEQUENCE [LARGE SCALE GENOMIC DNA]</scope>
    <source>
        <strain>ATCC 700922 / JCM 11081 / NRC-1</strain>
    </source>
</reference>
<gene>
    <name type="primary">coxA2</name>
    <name type="ordered locus">VNG_0657G</name>
</gene>
<feature type="chain" id="PRO_0000183465" description="Cytochrome c oxidase polypeptide 1">
    <location>
        <begin position="1"/>
        <end position="593"/>
    </location>
</feature>
<feature type="transmembrane region" description="Helical" evidence="2">
    <location>
        <begin position="5"/>
        <end position="25"/>
    </location>
</feature>
<feature type="transmembrane region" description="Helical" evidence="2">
    <location>
        <begin position="71"/>
        <end position="91"/>
    </location>
</feature>
<feature type="transmembrane region" description="Helical" evidence="2">
    <location>
        <begin position="122"/>
        <end position="142"/>
    </location>
</feature>
<feature type="transmembrane region" description="Helical" evidence="2">
    <location>
        <begin position="154"/>
        <end position="174"/>
    </location>
</feature>
<feature type="transmembrane region" description="Helical" evidence="2">
    <location>
        <begin position="204"/>
        <end position="224"/>
    </location>
</feature>
<feature type="transmembrane region" description="Helical" evidence="2">
    <location>
        <begin position="246"/>
        <end position="266"/>
    </location>
</feature>
<feature type="transmembrane region" description="Helical" evidence="2">
    <location>
        <begin position="288"/>
        <end position="308"/>
    </location>
</feature>
<feature type="transmembrane region" description="Helical" evidence="2">
    <location>
        <begin position="320"/>
        <end position="340"/>
    </location>
</feature>
<feature type="transmembrane region" description="Helical" evidence="2">
    <location>
        <begin position="358"/>
        <end position="378"/>
    </location>
</feature>
<feature type="transmembrane region" description="Helical" evidence="2">
    <location>
        <begin position="401"/>
        <end position="421"/>
    </location>
</feature>
<feature type="transmembrane region" description="Helical" evidence="2">
    <location>
        <begin position="425"/>
        <end position="445"/>
    </location>
</feature>
<feature type="transmembrane region" description="Helical" evidence="2">
    <location>
        <begin position="467"/>
        <end position="487"/>
    </location>
</feature>
<feature type="transmembrane region" description="Helical" evidence="2">
    <location>
        <begin position="506"/>
        <end position="526"/>
    </location>
</feature>
<feature type="region of interest" description="Disordered" evidence="3">
    <location>
        <begin position="562"/>
        <end position="593"/>
    </location>
</feature>
<feature type="binding site" description="axial binding residue" evidence="4">
    <location>
        <position position="117"/>
    </location>
    <ligand>
        <name>Fe(II)-heme a</name>
        <dbReference type="ChEBI" id="CHEBI:61715"/>
    </ligand>
    <ligandPart>
        <name>Fe</name>
        <dbReference type="ChEBI" id="CHEBI:18248"/>
    </ligandPart>
</feature>
<feature type="binding site" evidence="4">
    <location>
        <position position="294"/>
    </location>
    <ligand>
        <name>Cu cation</name>
        <dbReference type="ChEBI" id="CHEBI:23378"/>
        <label>B</label>
    </ligand>
</feature>
<feature type="binding site" evidence="4">
    <location>
        <position position="298"/>
    </location>
    <ligand>
        <name>Cu cation</name>
        <dbReference type="ChEBI" id="CHEBI:23378"/>
        <label>B</label>
    </ligand>
</feature>
<feature type="binding site" evidence="4">
    <location>
        <position position="343"/>
    </location>
    <ligand>
        <name>Cu cation</name>
        <dbReference type="ChEBI" id="CHEBI:23378"/>
        <label>B</label>
    </ligand>
</feature>
<feature type="binding site" evidence="4">
    <location>
        <position position="344"/>
    </location>
    <ligand>
        <name>Cu cation</name>
        <dbReference type="ChEBI" id="CHEBI:23378"/>
        <label>B</label>
    </ligand>
</feature>
<feature type="binding site" description="axial binding residue" evidence="4">
    <location>
        <position position="429"/>
    </location>
    <ligand>
        <name>heme a3</name>
        <dbReference type="ChEBI" id="CHEBI:83282"/>
    </ligand>
    <ligandPart>
        <name>Fe</name>
        <dbReference type="ChEBI" id="CHEBI:18248"/>
    </ligandPart>
</feature>
<feature type="binding site" description="axial binding residue" evidence="4">
    <location>
        <position position="431"/>
    </location>
    <ligand>
        <name>Fe(II)-heme a</name>
        <dbReference type="ChEBI" id="CHEBI:61715"/>
    </ligand>
    <ligandPart>
        <name>Fe</name>
        <dbReference type="ChEBI" id="CHEBI:18248"/>
    </ligandPart>
</feature>
<feature type="cross-link" description="1'-histidyl-3'-tyrosine (His-Tyr)" evidence="1">
    <location>
        <begin position="294"/>
        <end position="298"/>
    </location>
</feature>
<evidence type="ECO:0000250" key="1"/>
<evidence type="ECO:0000255" key="2"/>
<evidence type="ECO:0000256" key="3">
    <source>
        <dbReference type="SAM" id="MobiDB-lite"/>
    </source>
</evidence>
<evidence type="ECO:0000305" key="4"/>
<dbReference type="EC" id="7.1.1.9"/>
<dbReference type="EMBL" id="D10611">
    <property type="protein sequence ID" value="BAA01466.1"/>
    <property type="molecule type" value="Genomic_DNA"/>
</dbReference>
<dbReference type="EMBL" id="AE004437">
    <property type="protein sequence ID" value="AAG19154.1"/>
    <property type="molecule type" value="Genomic_DNA"/>
</dbReference>
<dbReference type="PIR" id="F84223">
    <property type="entry name" value="F84223"/>
</dbReference>
<dbReference type="PIR" id="JT0974">
    <property type="entry name" value="JT0974"/>
</dbReference>
<dbReference type="SMR" id="P33518"/>
<dbReference type="STRING" id="64091.VNG_0657G"/>
<dbReference type="TCDB" id="3.D.4.3.1">
    <property type="family name" value="the proton-translocating cytochrome oxidase (cox) superfamily"/>
</dbReference>
<dbReference type="PaxDb" id="64091-VNG_0657G"/>
<dbReference type="KEGG" id="hal:VNG_0657G"/>
<dbReference type="PATRIC" id="fig|64091.14.peg.502"/>
<dbReference type="HOGENOM" id="CLU_011899_7_1_2"/>
<dbReference type="InParanoid" id="P33518"/>
<dbReference type="OrthoDB" id="33297at2157"/>
<dbReference type="PhylomeDB" id="P33518"/>
<dbReference type="UniPathway" id="UPA00705"/>
<dbReference type="Proteomes" id="UP000000554">
    <property type="component" value="Chromosome"/>
</dbReference>
<dbReference type="GO" id="GO:0005886">
    <property type="term" value="C:plasma membrane"/>
    <property type="evidence" value="ECO:0007669"/>
    <property type="project" value="UniProtKB-SubCell"/>
</dbReference>
<dbReference type="GO" id="GO:0004129">
    <property type="term" value="F:cytochrome-c oxidase activity"/>
    <property type="evidence" value="ECO:0007669"/>
    <property type="project" value="UniProtKB-EC"/>
</dbReference>
<dbReference type="GO" id="GO:0020037">
    <property type="term" value="F:heme binding"/>
    <property type="evidence" value="ECO:0007669"/>
    <property type="project" value="InterPro"/>
</dbReference>
<dbReference type="GO" id="GO:0046872">
    <property type="term" value="F:metal ion binding"/>
    <property type="evidence" value="ECO:0007669"/>
    <property type="project" value="UniProtKB-KW"/>
</dbReference>
<dbReference type="GO" id="GO:0009060">
    <property type="term" value="P:aerobic respiration"/>
    <property type="evidence" value="ECO:0000318"/>
    <property type="project" value="GO_Central"/>
</dbReference>
<dbReference type="GO" id="GO:0015990">
    <property type="term" value="P:electron transport coupled proton transport"/>
    <property type="evidence" value="ECO:0007669"/>
    <property type="project" value="InterPro"/>
</dbReference>
<dbReference type="GO" id="GO:0006119">
    <property type="term" value="P:oxidative phosphorylation"/>
    <property type="evidence" value="ECO:0007669"/>
    <property type="project" value="UniProtKB-UniPathway"/>
</dbReference>
<dbReference type="GO" id="GO:0022904">
    <property type="term" value="P:respiratory electron transport chain"/>
    <property type="evidence" value="ECO:0000318"/>
    <property type="project" value="GO_Central"/>
</dbReference>
<dbReference type="Gene3D" id="1.20.210.10">
    <property type="entry name" value="Cytochrome c oxidase-like, subunit I domain"/>
    <property type="match status" value="1"/>
</dbReference>
<dbReference type="InterPro" id="IPR023616">
    <property type="entry name" value="Cyt_c_oxase-like_su1_dom"/>
</dbReference>
<dbReference type="InterPro" id="IPR036927">
    <property type="entry name" value="Cyt_c_oxase-like_su1_sf"/>
</dbReference>
<dbReference type="InterPro" id="IPR000883">
    <property type="entry name" value="Cyt_C_Oxase_1"/>
</dbReference>
<dbReference type="InterPro" id="IPR023615">
    <property type="entry name" value="Cyt_c_Oxase_su1_BS"/>
</dbReference>
<dbReference type="InterPro" id="IPR014241">
    <property type="entry name" value="Cyt_c_oxidase_su1_bac"/>
</dbReference>
<dbReference type="NCBIfam" id="TIGR02891">
    <property type="entry name" value="CtaD_CoxA"/>
    <property type="match status" value="1"/>
</dbReference>
<dbReference type="PANTHER" id="PTHR10422">
    <property type="entry name" value="CYTOCHROME C OXIDASE SUBUNIT 1"/>
    <property type="match status" value="1"/>
</dbReference>
<dbReference type="PANTHER" id="PTHR10422:SF18">
    <property type="entry name" value="CYTOCHROME C OXIDASE SUBUNIT 1"/>
    <property type="match status" value="1"/>
</dbReference>
<dbReference type="Pfam" id="PF00115">
    <property type="entry name" value="COX1"/>
    <property type="match status" value="1"/>
</dbReference>
<dbReference type="PRINTS" id="PR01165">
    <property type="entry name" value="CYCOXIDASEI"/>
</dbReference>
<dbReference type="SUPFAM" id="SSF81442">
    <property type="entry name" value="Cytochrome c oxidase subunit I-like"/>
    <property type="match status" value="1"/>
</dbReference>
<dbReference type="PROSITE" id="PS50855">
    <property type="entry name" value="COX1"/>
    <property type="match status" value="1"/>
</dbReference>
<dbReference type="PROSITE" id="PS00077">
    <property type="entry name" value="COX1_CUB"/>
    <property type="match status" value="1"/>
</dbReference>
<organism>
    <name type="scientific">Halobacterium salinarum (strain ATCC 700922 / JCM 11081 / NRC-1)</name>
    <name type="common">Halobacterium halobium</name>
    <dbReference type="NCBI Taxonomy" id="64091"/>
    <lineage>
        <taxon>Archaea</taxon>
        <taxon>Methanobacteriati</taxon>
        <taxon>Methanobacteriota</taxon>
        <taxon>Stenosarchaea group</taxon>
        <taxon>Halobacteria</taxon>
        <taxon>Halobacteriales</taxon>
        <taxon>Halobacteriaceae</taxon>
        <taxon>Halobacterium</taxon>
        <taxon>Halobacterium salinarum NRC-34001</taxon>
    </lineage>
</organism>
<comment type="function">
    <text>Cytochrome c oxidase is the component of the respiratory chain that catalyzes the reduction of oxygen to water. Subunits 1-3 form the functional core of the enzyme complex. CO I is the catalytic subunit of the enzyme. Electrons originating in cytochrome c are transferred via the copper A center of subunit 2 and heme A of subunit 1 to the bimetallic center formed by heme A3 and copper B.</text>
</comment>
<comment type="catalytic activity">
    <reaction>
        <text>4 Fe(II)-[cytochrome c] + O2 + 8 H(+)(in) = 4 Fe(III)-[cytochrome c] + 2 H2O + 4 H(+)(out)</text>
        <dbReference type="Rhea" id="RHEA:11436"/>
        <dbReference type="Rhea" id="RHEA-COMP:10350"/>
        <dbReference type="Rhea" id="RHEA-COMP:14399"/>
        <dbReference type="ChEBI" id="CHEBI:15377"/>
        <dbReference type="ChEBI" id="CHEBI:15378"/>
        <dbReference type="ChEBI" id="CHEBI:15379"/>
        <dbReference type="ChEBI" id="CHEBI:29033"/>
        <dbReference type="ChEBI" id="CHEBI:29034"/>
        <dbReference type="EC" id="7.1.1.9"/>
    </reaction>
</comment>
<comment type="pathway">
    <text>Energy metabolism; oxidative phosphorylation.</text>
</comment>
<comment type="subcellular location">
    <subcellularLocation>
        <location>Cell membrane</location>
        <topology>Multi-pass membrane protein</topology>
    </subcellularLocation>
</comment>
<comment type="similarity">
    <text evidence="4">Belongs to the heme-copper respiratory oxidase family.</text>
</comment>
<protein>
    <recommendedName>
        <fullName>Cytochrome c oxidase polypeptide 1</fullName>
        <ecNumber>7.1.1.9</ecNumber>
    </recommendedName>
    <alternativeName>
        <fullName>Cytochrome aa3 subunit 1</fullName>
    </alternativeName>
    <alternativeName>
        <fullName>Cytochrome c oxidase polypeptide I</fullName>
    </alternativeName>
</protein>
<accession>P33518</accession>
<accession>Q9HRK4</accession>
<name>COX1_HALSA</name>
<keyword id="KW-1003">Cell membrane</keyword>
<keyword id="KW-0186">Copper</keyword>
<keyword id="KW-0903">Direct protein sequencing</keyword>
<keyword id="KW-0249">Electron transport</keyword>
<keyword id="KW-0349">Heme</keyword>
<keyword id="KW-0408">Iron</keyword>
<keyword id="KW-0472">Membrane</keyword>
<keyword id="KW-0479">Metal-binding</keyword>
<keyword id="KW-1185">Reference proteome</keyword>
<keyword id="KW-0679">Respiratory chain</keyword>
<keyword id="KW-1278">Translocase</keyword>
<keyword id="KW-0812">Transmembrane</keyword>
<keyword id="KW-1133">Transmembrane helix</keyword>
<keyword id="KW-0813">Transport</keyword>
<sequence>MATAASSITLTVLMGVLLVGVVAVLARLEDWRSYTPLSDVGGGLGERTGYTHEEKPGGIIRWFTTVDHKDIGILYGVYGTIAFAWGGVSVLLMRTELATSSETLISPSLYNGLLTSHGITMLFLFGTPMIAAFGNYFIPLLIDADDMAFPRINAIAFWLLPPGAILIWSGFLIPGIATAQTSWTMYTPLSLQMSSPAVDMMMLGLHLTGVSATMGAINFIATIFTERGEDVGWPDLDIFSWTMLTQSGLILFAFPLFGSALIMLLLDRNFGTTFFTVAGGDPIFWQHLFWFFGHPEVYVLVLPPMGIVSLILPKFSGRKLFGFKFVVYSTLAIGVLSFGVWAHHMFTTGIDPRIRSSFMAVSLAISIPSAVKVFNWITTMWNGKLRLTAPMLFCIGFVQNFIIGGVTGVFLAVIPIDLILHDTYYVVGHFHFIVYGAIGFALFAASYYWFPMVTGRMYQKRLAHAHFWTALVGSNATFLAMLWLGYGGMPRRYATYIPQFATAHRLATVGAFLIGVSTLIWLFNMATSWREGPRVDSTDPWDLEETDQFTNDWAWFRAKEETTVLPDGGDEAQSEADAVTDGGQPAADSDTES</sequence>